<keyword id="KW-0324">Glycolysis</keyword>
<keyword id="KW-0413">Isomerase</keyword>
<keyword id="KW-0464">Manganese</keyword>
<keyword id="KW-0479">Metal-binding</keyword>
<feature type="chain" id="PRO_1000063980" description="2,3-bisphosphoglycerate-independent phosphoglycerate mutase">
    <location>
        <begin position="1"/>
        <end position="510"/>
    </location>
</feature>
<feature type="active site" description="Phosphoserine intermediate" evidence="1">
    <location>
        <position position="62"/>
    </location>
</feature>
<feature type="binding site" evidence="1">
    <location>
        <position position="12"/>
    </location>
    <ligand>
        <name>Mn(2+)</name>
        <dbReference type="ChEBI" id="CHEBI:29035"/>
        <label>2</label>
    </ligand>
</feature>
<feature type="binding site" evidence="1">
    <location>
        <position position="62"/>
    </location>
    <ligand>
        <name>Mn(2+)</name>
        <dbReference type="ChEBI" id="CHEBI:29035"/>
        <label>2</label>
    </ligand>
</feature>
<feature type="binding site" evidence="1">
    <location>
        <position position="123"/>
    </location>
    <ligand>
        <name>substrate</name>
    </ligand>
</feature>
<feature type="binding site" evidence="1">
    <location>
        <begin position="153"/>
        <end position="154"/>
    </location>
    <ligand>
        <name>substrate</name>
    </ligand>
</feature>
<feature type="binding site" evidence="1">
    <location>
        <position position="185"/>
    </location>
    <ligand>
        <name>substrate</name>
    </ligand>
</feature>
<feature type="binding site" evidence="1">
    <location>
        <position position="191"/>
    </location>
    <ligand>
        <name>substrate</name>
    </ligand>
</feature>
<feature type="binding site" evidence="1">
    <location>
        <begin position="260"/>
        <end position="263"/>
    </location>
    <ligand>
        <name>substrate</name>
    </ligand>
</feature>
<feature type="binding site" evidence="1">
    <location>
        <position position="335"/>
    </location>
    <ligand>
        <name>substrate</name>
    </ligand>
</feature>
<feature type="binding site" evidence="1">
    <location>
        <position position="402"/>
    </location>
    <ligand>
        <name>Mn(2+)</name>
        <dbReference type="ChEBI" id="CHEBI:29035"/>
        <label>1</label>
    </ligand>
</feature>
<feature type="binding site" evidence="1">
    <location>
        <position position="406"/>
    </location>
    <ligand>
        <name>Mn(2+)</name>
        <dbReference type="ChEBI" id="CHEBI:29035"/>
        <label>1</label>
    </ligand>
</feature>
<feature type="binding site" evidence="1">
    <location>
        <position position="443"/>
    </location>
    <ligand>
        <name>Mn(2+)</name>
        <dbReference type="ChEBI" id="CHEBI:29035"/>
        <label>2</label>
    </ligand>
</feature>
<feature type="binding site" evidence="1">
    <location>
        <position position="444"/>
    </location>
    <ligand>
        <name>Mn(2+)</name>
        <dbReference type="ChEBI" id="CHEBI:29035"/>
        <label>2</label>
    </ligand>
</feature>
<feature type="binding site" evidence="1">
    <location>
        <position position="461"/>
    </location>
    <ligand>
        <name>Mn(2+)</name>
        <dbReference type="ChEBI" id="CHEBI:29035"/>
        <label>1</label>
    </ligand>
</feature>
<reference key="1">
    <citation type="journal article" date="2006" name="J. Bacteriol.">
        <title>Whole-genome sequence of Listeria welshimeri reveals common steps in genome reduction with Listeria innocua as compared to Listeria monocytogenes.</title>
        <authorList>
            <person name="Hain T."/>
            <person name="Steinweg C."/>
            <person name="Kuenne C.T."/>
            <person name="Billion A."/>
            <person name="Ghai R."/>
            <person name="Chatterjee S.S."/>
            <person name="Domann E."/>
            <person name="Kaerst U."/>
            <person name="Goesmann A."/>
            <person name="Bekel T."/>
            <person name="Bartels D."/>
            <person name="Kaiser O."/>
            <person name="Meyer F."/>
            <person name="Puehler A."/>
            <person name="Weisshaar B."/>
            <person name="Wehland J."/>
            <person name="Liang C."/>
            <person name="Dandekar T."/>
            <person name="Lampidis R."/>
            <person name="Kreft J."/>
            <person name="Goebel W."/>
            <person name="Chakraborty T."/>
        </authorList>
    </citation>
    <scope>NUCLEOTIDE SEQUENCE [LARGE SCALE GENOMIC DNA]</scope>
    <source>
        <strain>ATCC 35897 / DSM 20650 / CCUG 15529 / CIP 8149 / NCTC 11857 / SLCC 5334 / V8</strain>
    </source>
</reference>
<evidence type="ECO:0000255" key="1">
    <source>
        <dbReference type="HAMAP-Rule" id="MF_01038"/>
    </source>
</evidence>
<accession>A0ALE0</accession>
<comment type="function">
    <text evidence="1">Catalyzes the interconversion of 2-phosphoglycerate and 3-phosphoglycerate.</text>
</comment>
<comment type="catalytic activity">
    <reaction evidence="1">
        <text>(2R)-2-phosphoglycerate = (2R)-3-phosphoglycerate</text>
        <dbReference type="Rhea" id="RHEA:15901"/>
        <dbReference type="ChEBI" id="CHEBI:58272"/>
        <dbReference type="ChEBI" id="CHEBI:58289"/>
        <dbReference type="EC" id="5.4.2.12"/>
    </reaction>
</comment>
<comment type="cofactor">
    <cofactor evidence="1">
        <name>Mn(2+)</name>
        <dbReference type="ChEBI" id="CHEBI:29035"/>
    </cofactor>
    <text evidence="1">Binds 2 manganese ions per subunit.</text>
</comment>
<comment type="pathway">
    <text evidence="1">Carbohydrate degradation; glycolysis; pyruvate from D-glyceraldehyde 3-phosphate: step 3/5.</text>
</comment>
<comment type="subunit">
    <text evidence="1">Monomer.</text>
</comment>
<comment type="similarity">
    <text evidence="1">Belongs to the BPG-independent phosphoglycerate mutase family.</text>
</comment>
<gene>
    <name evidence="1" type="primary">gpmI</name>
    <name type="ordered locus">lwe2404</name>
</gene>
<sequence length="510" mass="56255">MSKSPVAIIILDGFGKRAETVGNAVAQANKPNFDRYWADFPHGELKAAGLDVGLPEGQMGNSEVGHTNIGAGRIVYQSLTRIDKAIEEGEFQENKALNNAFTHTKENNSDLHLFGLLSDGGVHSHINHLVALLETAKDKGVKNVYIHAFLDGRDVAPQSSLEYLETLQKAMNDLNYGEIATVSGRFYAMDRDKRWERVEKAYKAIVSAEGEKFEDPIELVKASYANDKNDEFVVPAIITKDGKPVATVKDNDAVIFFNFRPDRAIQLSNAFTDKEWDHFDRGANHPKNIKFVTMTLYNPSVDAEVAFEPIEMKNVIGEVLSNEGLSQLRIAETEKYPHVTFFMNGGRNEEFPGENRILINSPKVETYDLQPEMSAYEVTDALVEDIKNDKHDAIILNFANPDMVGHSGMLEPTIKAIEAVDENLGRVVDLILEKGGSAIIFADHGNSETMSTPEGKPHTAHTTVPVPVIVTKKGVKLREGGRLADVAPTMLDLLGVKKPAEMTGESLIQK</sequence>
<proteinExistence type="inferred from homology"/>
<organism>
    <name type="scientific">Listeria welshimeri serovar 6b (strain ATCC 35897 / DSM 20650 / CCUG 15529 / CIP 8149 / NCTC 11857 / SLCC 5334 / V8)</name>
    <dbReference type="NCBI Taxonomy" id="386043"/>
    <lineage>
        <taxon>Bacteria</taxon>
        <taxon>Bacillati</taxon>
        <taxon>Bacillota</taxon>
        <taxon>Bacilli</taxon>
        <taxon>Bacillales</taxon>
        <taxon>Listeriaceae</taxon>
        <taxon>Listeria</taxon>
    </lineage>
</organism>
<name>GPMI_LISW6</name>
<dbReference type="EC" id="5.4.2.12" evidence="1"/>
<dbReference type="EMBL" id="AM263198">
    <property type="protein sequence ID" value="CAK21822.1"/>
    <property type="molecule type" value="Genomic_DNA"/>
</dbReference>
<dbReference type="RefSeq" id="WP_011703142.1">
    <property type="nucleotide sequence ID" value="NC_008555.1"/>
</dbReference>
<dbReference type="SMR" id="A0ALE0"/>
<dbReference type="STRING" id="386043.lwe2404"/>
<dbReference type="GeneID" id="61190325"/>
<dbReference type="KEGG" id="lwe:lwe2404"/>
<dbReference type="eggNOG" id="COG0696">
    <property type="taxonomic scope" value="Bacteria"/>
</dbReference>
<dbReference type="HOGENOM" id="CLU_026099_2_0_9"/>
<dbReference type="OrthoDB" id="9800863at2"/>
<dbReference type="UniPathway" id="UPA00109">
    <property type="reaction ID" value="UER00186"/>
</dbReference>
<dbReference type="Proteomes" id="UP000000779">
    <property type="component" value="Chromosome"/>
</dbReference>
<dbReference type="GO" id="GO:0005829">
    <property type="term" value="C:cytosol"/>
    <property type="evidence" value="ECO:0007669"/>
    <property type="project" value="TreeGrafter"/>
</dbReference>
<dbReference type="GO" id="GO:0030145">
    <property type="term" value="F:manganese ion binding"/>
    <property type="evidence" value="ECO:0007669"/>
    <property type="project" value="UniProtKB-UniRule"/>
</dbReference>
<dbReference type="GO" id="GO:0004619">
    <property type="term" value="F:phosphoglycerate mutase activity"/>
    <property type="evidence" value="ECO:0007669"/>
    <property type="project" value="UniProtKB-EC"/>
</dbReference>
<dbReference type="GO" id="GO:0006007">
    <property type="term" value="P:glucose catabolic process"/>
    <property type="evidence" value="ECO:0007669"/>
    <property type="project" value="InterPro"/>
</dbReference>
<dbReference type="GO" id="GO:0006096">
    <property type="term" value="P:glycolytic process"/>
    <property type="evidence" value="ECO:0007669"/>
    <property type="project" value="UniProtKB-UniRule"/>
</dbReference>
<dbReference type="CDD" id="cd16010">
    <property type="entry name" value="iPGM"/>
    <property type="match status" value="1"/>
</dbReference>
<dbReference type="FunFam" id="3.40.1450.10:FF:000001">
    <property type="entry name" value="2,3-bisphosphoglycerate-independent phosphoglycerate mutase"/>
    <property type="match status" value="1"/>
</dbReference>
<dbReference type="FunFam" id="3.40.720.10:FF:000001">
    <property type="entry name" value="2,3-bisphosphoglycerate-independent phosphoglycerate mutase"/>
    <property type="match status" value="1"/>
</dbReference>
<dbReference type="Gene3D" id="3.40.720.10">
    <property type="entry name" value="Alkaline Phosphatase, subunit A"/>
    <property type="match status" value="1"/>
</dbReference>
<dbReference type="Gene3D" id="3.40.1450.10">
    <property type="entry name" value="BPG-independent phosphoglycerate mutase, domain B"/>
    <property type="match status" value="1"/>
</dbReference>
<dbReference type="HAMAP" id="MF_01038">
    <property type="entry name" value="GpmI"/>
    <property type="match status" value="1"/>
</dbReference>
<dbReference type="InterPro" id="IPR017850">
    <property type="entry name" value="Alkaline_phosphatase_core_sf"/>
</dbReference>
<dbReference type="InterPro" id="IPR011258">
    <property type="entry name" value="BPG-indep_PGM_N"/>
</dbReference>
<dbReference type="InterPro" id="IPR006124">
    <property type="entry name" value="Metalloenzyme"/>
</dbReference>
<dbReference type="InterPro" id="IPR036646">
    <property type="entry name" value="PGAM_B_sf"/>
</dbReference>
<dbReference type="InterPro" id="IPR005995">
    <property type="entry name" value="Pgm_bpd_ind"/>
</dbReference>
<dbReference type="NCBIfam" id="TIGR01307">
    <property type="entry name" value="pgm_bpd_ind"/>
    <property type="match status" value="1"/>
</dbReference>
<dbReference type="PANTHER" id="PTHR31637">
    <property type="entry name" value="2,3-BISPHOSPHOGLYCERATE-INDEPENDENT PHOSPHOGLYCERATE MUTASE"/>
    <property type="match status" value="1"/>
</dbReference>
<dbReference type="PANTHER" id="PTHR31637:SF0">
    <property type="entry name" value="2,3-BISPHOSPHOGLYCERATE-INDEPENDENT PHOSPHOGLYCERATE MUTASE"/>
    <property type="match status" value="1"/>
</dbReference>
<dbReference type="Pfam" id="PF06415">
    <property type="entry name" value="iPGM_N"/>
    <property type="match status" value="1"/>
</dbReference>
<dbReference type="Pfam" id="PF01676">
    <property type="entry name" value="Metalloenzyme"/>
    <property type="match status" value="1"/>
</dbReference>
<dbReference type="PIRSF" id="PIRSF001492">
    <property type="entry name" value="IPGAM"/>
    <property type="match status" value="1"/>
</dbReference>
<dbReference type="SUPFAM" id="SSF64158">
    <property type="entry name" value="2,3-Bisphosphoglycerate-independent phosphoglycerate mutase, substrate-binding domain"/>
    <property type="match status" value="1"/>
</dbReference>
<dbReference type="SUPFAM" id="SSF53649">
    <property type="entry name" value="Alkaline phosphatase-like"/>
    <property type="match status" value="1"/>
</dbReference>
<protein>
    <recommendedName>
        <fullName evidence="1">2,3-bisphosphoglycerate-independent phosphoglycerate mutase</fullName>
        <shortName evidence="1">BPG-independent PGAM</shortName>
        <shortName evidence="1">Phosphoglyceromutase</shortName>
        <shortName evidence="1">iPGM</shortName>
        <ecNumber evidence="1">5.4.2.12</ecNumber>
    </recommendedName>
</protein>